<sequence length="100" mass="11268">MTKVTREEVEHIANLARLQISPEETEEMANTLESILDFAKQNDSADTEGVEPTYHVLDLQNVLREDKAIKGIPQELALKNAKETEDGQFKVPTIMNEEDA</sequence>
<proteinExistence type="inferred from homology"/>
<reference key="1">
    <citation type="submission" date="1999-11" db="EMBL/GenBank/DDBJ databases">
        <title>Glu-tRNAGln amidotransferase of Staphylococcus aureus.</title>
        <authorList>
            <person name="Namgoong S."/>
            <person name="Hong K.-W."/>
            <person name="Lee S.Y."/>
        </authorList>
    </citation>
    <scope>NUCLEOTIDE SEQUENCE [GENOMIC DNA]</scope>
    <source>
        <strain>ATCC 25923 / DSM 1104 / JCM 2413 / NBRC 14462 / NCIMB 12702 / NCTC 12981 / Seattle 1945</strain>
    </source>
</reference>
<protein>
    <recommendedName>
        <fullName>Aspartyl/glutamyl-tRNA(Asn/Gln) amidotransferase subunit C</fullName>
        <shortName>Asp/Glu-ADT subunit C</shortName>
        <ecNumber>6.3.5.-</ecNumber>
    </recommendedName>
</protein>
<comment type="function">
    <text evidence="1">Allows the formation of correctly charged Asn-tRNA(Asn) or Gln-tRNA(Gln) through the transamidation of misacylated Asp-tRNA(Asn) or Glu-tRNA(Gln) in organisms which lack either or both of asparaginyl-tRNA or glutaminyl-tRNA synthetases. The reaction takes place in the presence of glutamine and ATP through an activated phospho-Asp-tRNA(Asn) or phospho-Glu-tRNA(Gln) (By similarity).</text>
</comment>
<comment type="catalytic activity">
    <reaction>
        <text>L-glutamyl-tRNA(Gln) + L-glutamine + ATP + H2O = L-glutaminyl-tRNA(Gln) + L-glutamate + ADP + phosphate + H(+)</text>
        <dbReference type="Rhea" id="RHEA:17521"/>
        <dbReference type="Rhea" id="RHEA-COMP:9681"/>
        <dbReference type="Rhea" id="RHEA-COMP:9684"/>
        <dbReference type="ChEBI" id="CHEBI:15377"/>
        <dbReference type="ChEBI" id="CHEBI:15378"/>
        <dbReference type="ChEBI" id="CHEBI:29985"/>
        <dbReference type="ChEBI" id="CHEBI:30616"/>
        <dbReference type="ChEBI" id="CHEBI:43474"/>
        <dbReference type="ChEBI" id="CHEBI:58359"/>
        <dbReference type="ChEBI" id="CHEBI:78520"/>
        <dbReference type="ChEBI" id="CHEBI:78521"/>
        <dbReference type="ChEBI" id="CHEBI:456216"/>
    </reaction>
</comment>
<comment type="catalytic activity">
    <reaction>
        <text>L-aspartyl-tRNA(Asn) + L-glutamine + ATP + H2O = L-asparaginyl-tRNA(Asn) + L-glutamate + ADP + phosphate + 2 H(+)</text>
        <dbReference type="Rhea" id="RHEA:14513"/>
        <dbReference type="Rhea" id="RHEA-COMP:9674"/>
        <dbReference type="Rhea" id="RHEA-COMP:9677"/>
        <dbReference type="ChEBI" id="CHEBI:15377"/>
        <dbReference type="ChEBI" id="CHEBI:15378"/>
        <dbReference type="ChEBI" id="CHEBI:29985"/>
        <dbReference type="ChEBI" id="CHEBI:30616"/>
        <dbReference type="ChEBI" id="CHEBI:43474"/>
        <dbReference type="ChEBI" id="CHEBI:58359"/>
        <dbReference type="ChEBI" id="CHEBI:78515"/>
        <dbReference type="ChEBI" id="CHEBI:78516"/>
        <dbReference type="ChEBI" id="CHEBI:456216"/>
    </reaction>
</comment>
<comment type="subunit">
    <text evidence="1">Heterotrimer of A, B and C subunits.</text>
</comment>
<comment type="similarity">
    <text evidence="2">Belongs to the GatC family.</text>
</comment>
<name>GATC_STAAU</name>
<keyword id="KW-0067">ATP-binding</keyword>
<keyword id="KW-0436">Ligase</keyword>
<keyword id="KW-0547">Nucleotide-binding</keyword>
<keyword id="KW-0648">Protein biosynthesis</keyword>
<organism>
    <name type="scientific">Staphylococcus aureus</name>
    <dbReference type="NCBI Taxonomy" id="1280"/>
    <lineage>
        <taxon>Bacteria</taxon>
        <taxon>Bacillati</taxon>
        <taxon>Bacillota</taxon>
        <taxon>Bacilli</taxon>
        <taxon>Bacillales</taxon>
        <taxon>Staphylococcaceae</taxon>
        <taxon>Staphylococcus</taxon>
    </lineage>
</organism>
<accession>P68809</accession>
<accession>Q9RF08</accession>
<evidence type="ECO:0000250" key="1"/>
<evidence type="ECO:0000305" key="2"/>
<dbReference type="EC" id="6.3.5.-"/>
<dbReference type="EMBL" id="AF205033">
    <property type="protein sequence ID" value="AAF18135.1"/>
    <property type="molecule type" value="Genomic_DNA"/>
</dbReference>
<dbReference type="RefSeq" id="WP_000170162.1">
    <property type="nucleotide sequence ID" value="NZ_WYDB01000009.1"/>
</dbReference>
<dbReference type="SMR" id="P68809"/>
<dbReference type="GeneID" id="98346286"/>
<dbReference type="OMA" id="VTPMAMK"/>
<dbReference type="OrthoDB" id="9813938at2"/>
<dbReference type="GO" id="GO:0050566">
    <property type="term" value="F:asparaginyl-tRNA synthase (glutamine-hydrolyzing) activity"/>
    <property type="evidence" value="ECO:0007669"/>
    <property type="project" value="RHEA"/>
</dbReference>
<dbReference type="GO" id="GO:0005524">
    <property type="term" value="F:ATP binding"/>
    <property type="evidence" value="ECO:0007669"/>
    <property type="project" value="UniProtKB-KW"/>
</dbReference>
<dbReference type="GO" id="GO:0050567">
    <property type="term" value="F:glutaminyl-tRNA synthase (glutamine-hydrolyzing) activity"/>
    <property type="evidence" value="ECO:0007669"/>
    <property type="project" value="UniProtKB-UniRule"/>
</dbReference>
<dbReference type="GO" id="GO:0070681">
    <property type="term" value="P:glutaminyl-tRNAGln biosynthesis via transamidation"/>
    <property type="evidence" value="ECO:0007669"/>
    <property type="project" value="TreeGrafter"/>
</dbReference>
<dbReference type="GO" id="GO:0006450">
    <property type="term" value="P:regulation of translational fidelity"/>
    <property type="evidence" value="ECO:0007669"/>
    <property type="project" value="InterPro"/>
</dbReference>
<dbReference type="GO" id="GO:0006412">
    <property type="term" value="P:translation"/>
    <property type="evidence" value="ECO:0007669"/>
    <property type="project" value="UniProtKB-UniRule"/>
</dbReference>
<dbReference type="Gene3D" id="1.10.20.60">
    <property type="entry name" value="Glu-tRNAGln amidotransferase C subunit, N-terminal domain"/>
    <property type="match status" value="1"/>
</dbReference>
<dbReference type="HAMAP" id="MF_00122">
    <property type="entry name" value="GatC"/>
    <property type="match status" value="1"/>
</dbReference>
<dbReference type="InterPro" id="IPR036113">
    <property type="entry name" value="Asp/Glu-ADT_sf_sub_c"/>
</dbReference>
<dbReference type="InterPro" id="IPR003837">
    <property type="entry name" value="GatC"/>
</dbReference>
<dbReference type="NCBIfam" id="TIGR00135">
    <property type="entry name" value="gatC"/>
    <property type="match status" value="1"/>
</dbReference>
<dbReference type="PANTHER" id="PTHR15004">
    <property type="entry name" value="GLUTAMYL-TRNA(GLN) AMIDOTRANSFERASE SUBUNIT C, MITOCHONDRIAL"/>
    <property type="match status" value="1"/>
</dbReference>
<dbReference type="PANTHER" id="PTHR15004:SF0">
    <property type="entry name" value="GLUTAMYL-TRNA(GLN) AMIDOTRANSFERASE SUBUNIT C, MITOCHONDRIAL"/>
    <property type="match status" value="1"/>
</dbReference>
<dbReference type="Pfam" id="PF02686">
    <property type="entry name" value="GatC"/>
    <property type="match status" value="1"/>
</dbReference>
<dbReference type="SUPFAM" id="SSF141000">
    <property type="entry name" value="Glu-tRNAGln amidotransferase C subunit"/>
    <property type="match status" value="1"/>
</dbReference>
<feature type="chain" id="PRO_0000105334" description="Aspartyl/glutamyl-tRNA(Asn/Gln) amidotransferase subunit C">
    <location>
        <begin position="1"/>
        <end position="100"/>
    </location>
</feature>
<gene>
    <name type="primary">gatC</name>
</gene>